<proteinExistence type="inferred from homology"/>
<evidence type="ECO:0000255" key="1">
    <source>
        <dbReference type="HAMAP-Rule" id="MF_01131"/>
    </source>
</evidence>
<reference key="1">
    <citation type="journal article" date="2006" name="Proc. Natl. Acad. Sci. U.S.A.">
        <title>Molecular genetic anatomy of inter- and intraserotype variation in the human bacterial pathogen group A Streptococcus.</title>
        <authorList>
            <person name="Beres S.B."/>
            <person name="Richter E.W."/>
            <person name="Nagiec M.J."/>
            <person name="Sumby P."/>
            <person name="Porcella S.F."/>
            <person name="DeLeo F.R."/>
            <person name="Musser J.M."/>
        </authorList>
    </citation>
    <scope>NUCLEOTIDE SEQUENCE [LARGE SCALE GENOMIC DNA]</scope>
    <source>
        <strain>MGAS9429</strain>
    </source>
</reference>
<accession>Q1JLS1</accession>
<feature type="chain" id="PRO_1000065422" description="Redox-sensing transcriptional repressor Rex">
    <location>
        <begin position="1"/>
        <end position="214"/>
    </location>
</feature>
<feature type="DNA-binding region" description="H-T-H motif" evidence="1">
    <location>
        <begin position="17"/>
        <end position="56"/>
    </location>
</feature>
<feature type="binding site" evidence="1">
    <location>
        <begin position="91"/>
        <end position="96"/>
    </location>
    <ligand>
        <name>NAD(+)</name>
        <dbReference type="ChEBI" id="CHEBI:57540"/>
    </ligand>
</feature>
<dbReference type="EMBL" id="CP000259">
    <property type="protein sequence ID" value="ABF32148.1"/>
    <property type="molecule type" value="Genomic_DNA"/>
</dbReference>
<dbReference type="RefSeq" id="WP_002989832.1">
    <property type="nucleotide sequence ID" value="NC_008021.1"/>
</dbReference>
<dbReference type="SMR" id="Q1JLS1"/>
<dbReference type="KEGG" id="spk:MGAS9429_Spy0961"/>
<dbReference type="HOGENOM" id="CLU_061534_1_1_9"/>
<dbReference type="Proteomes" id="UP000002433">
    <property type="component" value="Chromosome"/>
</dbReference>
<dbReference type="GO" id="GO:0005737">
    <property type="term" value="C:cytoplasm"/>
    <property type="evidence" value="ECO:0007669"/>
    <property type="project" value="UniProtKB-SubCell"/>
</dbReference>
<dbReference type="GO" id="GO:0003677">
    <property type="term" value="F:DNA binding"/>
    <property type="evidence" value="ECO:0007669"/>
    <property type="project" value="UniProtKB-UniRule"/>
</dbReference>
<dbReference type="GO" id="GO:0003700">
    <property type="term" value="F:DNA-binding transcription factor activity"/>
    <property type="evidence" value="ECO:0007669"/>
    <property type="project" value="UniProtKB-UniRule"/>
</dbReference>
<dbReference type="GO" id="GO:0045892">
    <property type="term" value="P:negative regulation of DNA-templated transcription"/>
    <property type="evidence" value="ECO:0007669"/>
    <property type="project" value="InterPro"/>
</dbReference>
<dbReference type="GO" id="GO:0051775">
    <property type="term" value="P:response to redox state"/>
    <property type="evidence" value="ECO:0007669"/>
    <property type="project" value="InterPro"/>
</dbReference>
<dbReference type="Gene3D" id="3.40.50.720">
    <property type="entry name" value="NAD(P)-binding Rossmann-like Domain"/>
    <property type="match status" value="1"/>
</dbReference>
<dbReference type="Gene3D" id="1.10.10.10">
    <property type="entry name" value="Winged helix-like DNA-binding domain superfamily/Winged helix DNA-binding domain"/>
    <property type="match status" value="1"/>
</dbReference>
<dbReference type="HAMAP" id="MF_01131">
    <property type="entry name" value="Rex"/>
    <property type="match status" value="1"/>
</dbReference>
<dbReference type="InterPro" id="IPR003781">
    <property type="entry name" value="CoA-bd"/>
</dbReference>
<dbReference type="InterPro" id="IPR036291">
    <property type="entry name" value="NAD(P)-bd_dom_sf"/>
</dbReference>
<dbReference type="InterPro" id="IPR009718">
    <property type="entry name" value="Rex_DNA-bd_C_dom"/>
</dbReference>
<dbReference type="InterPro" id="IPR022876">
    <property type="entry name" value="Tscrpt_rep_Rex"/>
</dbReference>
<dbReference type="InterPro" id="IPR036388">
    <property type="entry name" value="WH-like_DNA-bd_sf"/>
</dbReference>
<dbReference type="InterPro" id="IPR036390">
    <property type="entry name" value="WH_DNA-bd_sf"/>
</dbReference>
<dbReference type="NCBIfam" id="NF003988">
    <property type="entry name" value="PRK05472.1-1"/>
    <property type="match status" value="1"/>
</dbReference>
<dbReference type="NCBIfam" id="NF003989">
    <property type="entry name" value="PRK05472.1-3"/>
    <property type="match status" value="1"/>
</dbReference>
<dbReference type="NCBIfam" id="NF003991">
    <property type="entry name" value="PRK05472.1-5"/>
    <property type="match status" value="1"/>
</dbReference>
<dbReference type="NCBIfam" id="NF003994">
    <property type="entry name" value="PRK05472.2-3"/>
    <property type="match status" value="1"/>
</dbReference>
<dbReference type="NCBIfam" id="NF003995">
    <property type="entry name" value="PRK05472.2-4"/>
    <property type="match status" value="1"/>
</dbReference>
<dbReference type="NCBIfam" id="NF003996">
    <property type="entry name" value="PRK05472.2-5"/>
    <property type="match status" value="1"/>
</dbReference>
<dbReference type="PANTHER" id="PTHR35786">
    <property type="entry name" value="REDOX-SENSING TRANSCRIPTIONAL REPRESSOR REX"/>
    <property type="match status" value="1"/>
</dbReference>
<dbReference type="PANTHER" id="PTHR35786:SF1">
    <property type="entry name" value="REDOX-SENSING TRANSCRIPTIONAL REPRESSOR REX 1"/>
    <property type="match status" value="1"/>
</dbReference>
<dbReference type="Pfam" id="PF02629">
    <property type="entry name" value="CoA_binding"/>
    <property type="match status" value="1"/>
</dbReference>
<dbReference type="Pfam" id="PF06971">
    <property type="entry name" value="Put_DNA-bind_N"/>
    <property type="match status" value="1"/>
</dbReference>
<dbReference type="SMART" id="SM00881">
    <property type="entry name" value="CoA_binding"/>
    <property type="match status" value="1"/>
</dbReference>
<dbReference type="SUPFAM" id="SSF51735">
    <property type="entry name" value="NAD(P)-binding Rossmann-fold domains"/>
    <property type="match status" value="1"/>
</dbReference>
<dbReference type="SUPFAM" id="SSF46785">
    <property type="entry name" value="Winged helix' DNA-binding domain"/>
    <property type="match status" value="1"/>
</dbReference>
<comment type="function">
    <text evidence="1">Modulates transcription in response to changes in cellular NADH/NAD(+) redox state.</text>
</comment>
<comment type="subunit">
    <text evidence="1">Homodimer.</text>
</comment>
<comment type="subcellular location">
    <subcellularLocation>
        <location evidence="1">Cytoplasm</location>
    </subcellularLocation>
</comment>
<comment type="similarity">
    <text evidence="1">Belongs to the transcriptional regulatory Rex family.</text>
</comment>
<gene>
    <name evidence="1" type="primary">rex</name>
    <name type="ordered locus">MGAS9429_Spy0961</name>
</gene>
<organism>
    <name type="scientific">Streptococcus pyogenes serotype M12 (strain MGAS9429)</name>
    <dbReference type="NCBI Taxonomy" id="370551"/>
    <lineage>
        <taxon>Bacteria</taxon>
        <taxon>Bacillati</taxon>
        <taxon>Bacillota</taxon>
        <taxon>Bacilli</taxon>
        <taxon>Lactobacillales</taxon>
        <taxon>Streptococcaceae</taxon>
        <taxon>Streptococcus</taxon>
    </lineage>
</organism>
<protein>
    <recommendedName>
        <fullName evidence="1">Redox-sensing transcriptional repressor Rex</fullName>
    </recommendedName>
</protein>
<name>REX_STRPC</name>
<keyword id="KW-0963">Cytoplasm</keyword>
<keyword id="KW-0238">DNA-binding</keyword>
<keyword id="KW-0520">NAD</keyword>
<keyword id="KW-0678">Repressor</keyword>
<keyword id="KW-0804">Transcription</keyword>
<keyword id="KW-0805">Transcription regulation</keyword>
<sequence>MVIDKSIPKATAKRLSLYYRIFKRFHADQVEKASSKQIADAMGIDSATVRRDFSYFGELGRRGFGYDVTKLMNFFADLLNDHSTTNVILVGCGNIGRALLHYRFHDRNKMQIAMGFDTDDNALVGTKTADNIPVHGISSVKERIANTDIETAILTVPSIHAQEVTDQLIEVGIKGILSFAPVHLQVPKGVIVQSVDLTSELQTLLYFMNQNHLD</sequence>